<accession>P63559</accession>
<accession>Q99X39</accession>
<reference key="1">
    <citation type="journal article" date="2001" name="Lancet">
        <title>Whole genome sequencing of meticillin-resistant Staphylococcus aureus.</title>
        <authorList>
            <person name="Kuroda M."/>
            <person name="Ohta T."/>
            <person name="Uchiyama I."/>
            <person name="Baba T."/>
            <person name="Yuzawa H."/>
            <person name="Kobayashi I."/>
            <person name="Cui L."/>
            <person name="Oguchi A."/>
            <person name="Aoki K."/>
            <person name="Nagai Y."/>
            <person name="Lian J.-Q."/>
            <person name="Ito T."/>
            <person name="Kanamori M."/>
            <person name="Matsumaru H."/>
            <person name="Maruyama A."/>
            <person name="Murakami H."/>
            <person name="Hosoyama A."/>
            <person name="Mizutani-Ui Y."/>
            <person name="Takahashi N.K."/>
            <person name="Sawano T."/>
            <person name="Inoue R."/>
            <person name="Kaito C."/>
            <person name="Sekimizu K."/>
            <person name="Hirakawa H."/>
            <person name="Kuhara S."/>
            <person name="Goto S."/>
            <person name="Yabuzaki J."/>
            <person name="Kanehisa M."/>
            <person name="Yamashita A."/>
            <person name="Oshima K."/>
            <person name="Furuya K."/>
            <person name="Yoshino C."/>
            <person name="Shiba T."/>
            <person name="Hattori M."/>
            <person name="Ogasawara N."/>
            <person name="Hayashi H."/>
            <person name="Hiramatsu K."/>
        </authorList>
    </citation>
    <scope>NUCLEOTIDE SEQUENCE [LARGE SCALE GENOMIC DNA]</scope>
    <source>
        <strain>Mu50 / ATCC 700699</strain>
    </source>
</reference>
<keyword id="KW-0028">Amino-acid biosynthesis</keyword>
<keyword id="KW-0055">Arginine biosynthesis</keyword>
<keyword id="KW-0067">ATP-binding</keyword>
<keyword id="KW-0963">Cytoplasm</keyword>
<keyword id="KW-0418">Kinase</keyword>
<keyword id="KW-0547">Nucleotide-binding</keyword>
<keyword id="KW-0808">Transferase</keyword>
<evidence type="ECO:0000255" key="1">
    <source>
        <dbReference type="HAMAP-Rule" id="MF_00082"/>
    </source>
</evidence>
<dbReference type="EC" id="2.7.2.8" evidence="1"/>
<dbReference type="EMBL" id="BA000017">
    <property type="protein sequence ID" value="BAB56344.1"/>
    <property type="molecule type" value="Genomic_DNA"/>
</dbReference>
<dbReference type="RefSeq" id="WP_000668894.1">
    <property type="nucleotide sequence ID" value="NC_002758.2"/>
</dbReference>
<dbReference type="SMR" id="P63559"/>
<dbReference type="DNASU" id="1120141"/>
<dbReference type="KEGG" id="sav:SAV0182"/>
<dbReference type="HOGENOM" id="CLU_053680_1_0_9"/>
<dbReference type="PhylomeDB" id="P63559"/>
<dbReference type="UniPathway" id="UPA00068">
    <property type="reaction ID" value="UER00107"/>
</dbReference>
<dbReference type="Proteomes" id="UP000002481">
    <property type="component" value="Chromosome"/>
</dbReference>
<dbReference type="GO" id="GO:0005737">
    <property type="term" value="C:cytoplasm"/>
    <property type="evidence" value="ECO:0007669"/>
    <property type="project" value="UniProtKB-SubCell"/>
</dbReference>
<dbReference type="GO" id="GO:0003991">
    <property type="term" value="F:acetylglutamate kinase activity"/>
    <property type="evidence" value="ECO:0007669"/>
    <property type="project" value="UniProtKB-UniRule"/>
</dbReference>
<dbReference type="GO" id="GO:0005524">
    <property type="term" value="F:ATP binding"/>
    <property type="evidence" value="ECO:0007669"/>
    <property type="project" value="UniProtKB-UniRule"/>
</dbReference>
<dbReference type="GO" id="GO:0042450">
    <property type="term" value="P:arginine biosynthetic process via ornithine"/>
    <property type="evidence" value="ECO:0007669"/>
    <property type="project" value="UniProtKB-UniRule"/>
</dbReference>
<dbReference type="GO" id="GO:0006526">
    <property type="term" value="P:L-arginine biosynthetic process"/>
    <property type="evidence" value="ECO:0007669"/>
    <property type="project" value="UniProtKB-UniPathway"/>
</dbReference>
<dbReference type="CDD" id="cd04238">
    <property type="entry name" value="AAK_NAGK-like"/>
    <property type="match status" value="1"/>
</dbReference>
<dbReference type="FunFam" id="3.40.1160.10:FF:000037">
    <property type="entry name" value="Acetylglutamate kinase"/>
    <property type="match status" value="1"/>
</dbReference>
<dbReference type="Gene3D" id="3.40.1160.10">
    <property type="entry name" value="Acetylglutamate kinase-like"/>
    <property type="match status" value="1"/>
</dbReference>
<dbReference type="HAMAP" id="MF_00082">
    <property type="entry name" value="ArgB"/>
    <property type="match status" value="1"/>
</dbReference>
<dbReference type="InterPro" id="IPR036393">
    <property type="entry name" value="AceGlu_kinase-like_sf"/>
</dbReference>
<dbReference type="InterPro" id="IPR004662">
    <property type="entry name" value="AcgluKinase_fam"/>
</dbReference>
<dbReference type="InterPro" id="IPR037528">
    <property type="entry name" value="ArgB"/>
</dbReference>
<dbReference type="InterPro" id="IPR001048">
    <property type="entry name" value="Asp/Glu/Uridylate_kinase"/>
</dbReference>
<dbReference type="NCBIfam" id="TIGR00761">
    <property type="entry name" value="argB"/>
    <property type="match status" value="1"/>
</dbReference>
<dbReference type="PANTHER" id="PTHR23342">
    <property type="entry name" value="N-ACETYLGLUTAMATE SYNTHASE"/>
    <property type="match status" value="1"/>
</dbReference>
<dbReference type="PANTHER" id="PTHR23342:SF0">
    <property type="entry name" value="N-ACETYLGLUTAMATE SYNTHASE, MITOCHONDRIAL"/>
    <property type="match status" value="1"/>
</dbReference>
<dbReference type="Pfam" id="PF00696">
    <property type="entry name" value="AA_kinase"/>
    <property type="match status" value="1"/>
</dbReference>
<dbReference type="PIRSF" id="PIRSF000728">
    <property type="entry name" value="NAGK"/>
    <property type="match status" value="1"/>
</dbReference>
<dbReference type="SUPFAM" id="SSF53633">
    <property type="entry name" value="Carbamate kinase-like"/>
    <property type="match status" value="1"/>
</dbReference>
<gene>
    <name evidence="1" type="primary">argB</name>
    <name type="ordered locus">SAV0182</name>
</gene>
<name>ARGB_STAAM</name>
<organism>
    <name type="scientific">Staphylococcus aureus (strain Mu50 / ATCC 700699)</name>
    <dbReference type="NCBI Taxonomy" id="158878"/>
    <lineage>
        <taxon>Bacteria</taxon>
        <taxon>Bacillati</taxon>
        <taxon>Bacillota</taxon>
        <taxon>Bacilli</taxon>
        <taxon>Bacillales</taxon>
        <taxon>Staphylococcaceae</taxon>
        <taxon>Staphylococcus</taxon>
    </lineage>
</organism>
<proteinExistence type="inferred from homology"/>
<sequence>MKFIVIKIGGSTLSDMHPSIINNIKHLRSNNIYPIIVHGGGPFINEALSNQQIEPHFVNGLRVTDKATMTITKHTLIADVNTALVAQFNQHQCSAIGLCGLDAQLFEITSFDQQYGYVGVPTALNKDALQYLCTKFVPIINSIGFNNHDGEFYNINADTLAYFIASSLKAPIYVLSNIAGVLINDVVIPQLPLVDIHQYIEHGDIYGGMIPKVLDAKNAIENGCPKVIIASGNKPNIIESIYNNDFVGTTILNS</sequence>
<protein>
    <recommendedName>
        <fullName evidence="1">Acetylglutamate kinase</fullName>
        <ecNumber evidence="1">2.7.2.8</ecNumber>
    </recommendedName>
    <alternativeName>
        <fullName evidence="1">N-acetyl-L-glutamate 5-phosphotransferase</fullName>
    </alternativeName>
    <alternativeName>
        <fullName evidence="1">NAG kinase</fullName>
        <shortName evidence="1">NAGK</shortName>
    </alternativeName>
</protein>
<comment type="function">
    <text evidence="1">Catalyzes the ATP-dependent phosphorylation of N-acetyl-L-glutamate.</text>
</comment>
<comment type="catalytic activity">
    <reaction evidence="1">
        <text>N-acetyl-L-glutamate + ATP = N-acetyl-L-glutamyl 5-phosphate + ADP</text>
        <dbReference type="Rhea" id="RHEA:14629"/>
        <dbReference type="ChEBI" id="CHEBI:30616"/>
        <dbReference type="ChEBI" id="CHEBI:44337"/>
        <dbReference type="ChEBI" id="CHEBI:57936"/>
        <dbReference type="ChEBI" id="CHEBI:456216"/>
        <dbReference type="EC" id="2.7.2.8"/>
    </reaction>
</comment>
<comment type="pathway">
    <text evidence="1">Amino-acid biosynthesis; L-arginine biosynthesis; N(2)-acetyl-L-ornithine from L-glutamate: step 2/4.</text>
</comment>
<comment type="subcellular location">
    <subcellularLocation>
        <location evidence="1">Cytoplasm</location>
    </subcellularLocation>
</comment>
<comment type="similarity">
    <text evidence="1">Belongs to the acetylglutamate kinase family. ArgB subfamily.</text>
</comment>
<feature type="chain" id="PRO_0000112663" description="Acetylglutamate kinase">
    <location>
        <begin position="1"/>
        <end position="254"/>
    </location>
</feature>
<feature type="binding site" evidence="1">
    <location>
        <begin position="40"/>
        <end position="41"/>
    </location>
    <ligand>
        <name>substrate</name>
    </ligand>
</feature>
<feature type="binding site" evidence="1">
    <location>
        <position position="62"/>
    </location>
    <ligand>
        <name>substrate</name>
    </ligand>
</feature>
<feature type="binding site" evidence="1">
    <location>
        <position position="154"/>
    </location>
    <ligand>
        <name>substrate</name>
    </ligand>
</feature>
<feature type="site" description="Transition state stabilizer" evidence="1">
    <location>
        <position position="7"/>
    </location>
</feature>
<feature type="site" description="Transition state stabilizer" evidence="1">
    <location>
        <position position="212"/>
    </location>
</feature>